<accession>A5G1Y9</accession>
<gene>
    <name type="primary">acyP</name>
    <name type="ordered locus">Acry_2680</name>
</gene>
<name>ACYP_ACICJ</name>
<evidence type="ECO:0000255" key="1">
    <source>
        <dbReference type="PROSITE-ProRule" id="PRU00520"/>
    </source>
</evidence>
<evidence type="ECO:0000305" key="2"/>
<reference key="1">
    <citation type="submission" date="2007-05" db="EMBL/GenBank/DDBJ databases">
        <title>Complete sequence of chromosome of Acidiphilium cryptum JF-5.</title>
        <authorList>
            <consortium name="US DOE Joint Genome Institute"/>
            <person name="Copeland A."/>
            <person name="Lucas S."/>
            <person name="Lapidus A."/>
            <person name="Barry K."/>
            <person name="Detter J.C."/>
            <person name="Glavina del Rio T."/>
            <person name="Hammon N."/>
            <person name="Israni S."/>
            <person name="Dalin E."/>
            <person name="Tice H."/>
            <person name="Pitluck S."/>
            <person name="Sims D."/>
            <person name="Brettin T."/>
            <person name="Bruce D."/>
            <person name="Han C."/>
            <person name="Schmutz J."/>
            <person name="Larimer F."/>
            <person name="Land M."/>
            <person name="Hauser L."/>
            <person name="Kyrpides N."/>
            <person name="Kim E."/>
            <person name="Magnuson T."/>
            <person name="Richardson P."/>
        </authorList>
    </citation>
    <scope>NUCLEOTIDE SEQUENCE [LARGE SCALE GENOMIC DNA]</scope>
    <source>
        <strain>JF-5</strain>
    </source>
</reference>
<protein>
    <recommendedName>
        <fullName>Acylphosphatase</fullName>
        <ecNumber>3.6.1.7</ecNumber>
    </recommendedName>
    <alternativeName>
        <fullName>Acylphosphate phosphohydrolase</fullName>
    </alternativeName>
</protein>
<sequence>MIAKHLILSGRVQGVGFRDWMVTRARRLALAGWVRNRADGTLEALVAGDAPAVEELLRACRRGPPLADVTDIVETFAEPPAEPGFVKRATG</sequence>
<feature type="chain" id="PRO_0000326638" description="Acylphosphatase">
    <location>
        <begin position="1"/>
        <end position="91"/>
    </location>
</feature>
<feature type="domain" description="Acylphosphatase-like" evidence="1">
    <location>
        <begin position="3"/>
        <end position="89"/>
    </location>
</feature>
<feature type="active site" evidence="1">
    <location>
        <position position="18"/>
    </location>
</feature>
<feature type="active site" evidence="1">
    <location>
        <position position="36"/>
    </location>
</feature>
<dbReference type="EC" id="3.6.1.7"/>
<dbReference type="EMBL" id="CP000697">
    <property type="protein sequence ID" value="ABQ31871.1"/>
    <property type="molecule type" value="Genomic_DNA"/>
</dbReference>
<dbReference type="RefSeq" id="WP_012040230.1">
    <property type="nucleotide sequence ID" value="NC_009484.1"/>
</dbReference>
<dbReference type="SMR" id="A5G1Y9"/>
<dbReference type="STRING" id="349163.Acry_2680"/>
<dbReference type="KEGG" id="acr:Acry_2680"/>
<dbReference type="eggNOG" id="COG1254">
    <property type="taxonomic scope" value="Bacteria"/>
</dbReference>
<dbReference type="HOGENOM" id="CLU_141932_3_2_5"/>
<dbReference type="Proteomes" id="UP000000245">
    <property type="component" value="Chromosome"/>
</dbReference>
<dbReference type="GO" id="GO:0003998">
    <property type="term" value="F:acylphosphatase activity"/>
    <property type="evidence" value="ECO:0007669"/>
    <property type="project" value="UniProtKB-EC"/>
</dbReference>
<dbReference type="Gene3D" id="3.30.70.100">
    <property type="match status" value="1"/>
</dbReference>
<dbReference type="InterPro" id="IPR020456">
    <property type="entry name" value="Acylphosphatase"/>
</dbReference>
<dbReference type="InterPro" id="IPR001792">
    <property type="entry name" value="Acylphosphatase-like_dom"/>
</dbReference>
<dbReference type="InterPro" id="IPR036046">
    <property type="entry name" value="Acylphosphatase-like_dom_sf"/>
</dbReference>
<dbReference type="InterPro" id="IPR017968">
    <property type="entry name" value="Acylphosphatase_CS"/>
</dbReference>
<dbReference type="PANTHER" id="PTHR47268">
    <property type="entry name" value="ACYLPHOSPHATASE"/>
    <property type="match status" value="1"/>
</dbReference>
<dbReference type="PANTHER" id="PTHR47268:SF4">
    <property type="entry name" value="ACYLPHOSPHATASE"/>
    <property type="match status" value="1"/>
</dbReference>
<dbReference type="Pfam" id="PF00708">
    <property type="entry name" value="Acylphosphatase"/>
    <property type="match status" value="1"/>
</dbReference>
<dbReference type="PRINTS" id="PR00112">
    <property type="entry name" value="ACYLPHPHTASE"/>
</dbReference>
<dbReference type="SUPFAM" id="SSF54975">
    <property type="entry name" value="Acylphosphatase/BLUF domain-like"/>
    <property type="match status" value="1"/>
</dbReference>
<dbReference type="PROSITE" id="PS00150">
    <property type="entry name" value="ACYLPHOSPHATASE_1"/>
    <property type="match status" value="1"/>
</dbReference>
<dbReference type="PROSITE" id="PS51160">
    <property type="entry name" value="ACYLPHOSPHATASE_3"/>
    <property type="match status" value="1"/>
</dbReference>
<organism>
    <name type="scientific">Acidiphilium cryptum (strain JF-5)</name>
    <dbReference type="NCBI Taxonomy" id="349163"/>
    <lineage>
        <taxon>Bacteria</taxon>
        <taxon>Pseudomonadati</taxon>
        <taxon>Pseudomonadota</taxon>
        <taxon>Alphaproteobacteria</taxon>
        <taxon>Acetobacterales</taxon>
        <taxon>Acidocellaceae</taxon>
        <taxon>Acidiphilium</taxon>
    </lineage>
</organism>
<proteinExistence type="inferred from homology"/>
<comment type="catalytic activity">
    <reaction>
        <text>an acyl phosphate + H2O = a carboxylate + phosphate + H(+)</text>
        <dbReference type="Rhea" id="RHEA:14965"/>
        <dbReference type="ChEBI" id="CHEBI:15377"/>
        <dbReference type="ChEBI" id="CHEBI:15378"/>
        <dbReference type="ChEBI" id="CHEBI:29067"/>
        <dbReference type="ChEBI" id="CHEBI:43474"/>
        <dbReference type="ChEBI" id="CHEBI:59918"/>
        <dbReference type="EC" id="3.6.1.7"/>
    </reaction>
</comment>
<comment type="similarity">
    <text evidence="2">Belongs to the acylphosphatase family.</text>
</comment>
<keyword id="KW-0378">Hydrolase</keyword>
<keyword id="KW-1185">Reference proteome</keyword>